<evidence type="ECO:0000255" key="1">
    <source>
        <dbReference type="HAMAP-Rule" id="MF_00143"/>
    </source>
</evidence>
<organism>
    <name type="scientific">Haemophilus influenzae (strain 86-028NP)</name>
    <dbReference type="NCBI Taxonomy" id="281310"/>
    <lineage>
        <taxon>Bacteria</taxon>
        <taxon>Pseudomonadati</taxon>
        <taxon>Pseudomonadota</taxon>
        <taxon>Gammaproteobacteria</taxon>
        <taxon>Pasteurellales</taxon>
        <taxon>Pasteurellaceae</taxon>
        <taxon>Haemophilus</taxon>
    </lineage>
</organism>
<gene>
    <name type="ordered locus">NTHI0635</name>
</gene>
<sequence>MKENKPVDPYAKYNEQSNIIAKIIFASRWLQVPIYLGLIVTLAIYSYKFIKGLWELVINVNDMDSNTIMLGVLNLIDVVMIANLLVMVTIGGYEIFVSKLRTRNHPDQPEWMSHVNATVLKVKLSMSIIGISSIHMLQTFVNASNMPEKTMMWQLLLHLGFLVSAIALAYTDKILYSTSHKTH</sequence>
<accession>Q4QN39</accession>
<name>Y635_HAEI8</name>
<dbReference type="EMBL" id="CP000057">
    <property type="protein sequence ID" value="AAX87558.1"/>
    <property type="molecule type" value="Genomic_DNA"/>
</dbReference>
<dbReference type="RefSeq" id="WP_005649445.1">
    <property type="nucleotide sequence ID" value="NC_007146.2"/>
</dbReference>
<dbReference type="KEGG" id="hit:NTHI0635"/>
<dbReference type="HOGENOM" id="CLU_097887_0_0_6"/>
<dbReference type="Proteomes" id="UP000002525">
    <property type="component" value="Chromosome"/>
</dbReference>
<dbReference type="GO" id="GO:0005886">
    <property type="term" value="C:plasma membrane"/>
    <property type="evidence" value="ECO:0007669"/>
    <property type="project" value="UniProtKB-SubCell"/>
</dbReference>
<dbReference type="HAMAP" id="MF_00143">
    <property type="entry name" value="UPF0114"/>
    <property type="match status" value="1"/>
</dbReference>
<dbReference type="InterPro" id="IPR005134">
    <property type="entry name" value="UPF0114"/>
</dbReference>
<dbReference type="InterPro" id="IPR020761">
    <property type="entry name" value="UPF0114_bac"/>
</dbReference>
<dbReference type="NCBIfam" id="TIGR00645">
    <property type="entry name" value="HI0507"/>
    <property type="match status" value="1"/>
</dbReference>
<dbReference type="PANTHER" id="PTHR38596">
    <property type="entry name" value="UPF0114 PROTEIN YQHA"/>
    <property type="match status" value="1"/>
</dbReference>
<dbReference type="PANTHER" id="PTHR38596:SF1">
    <property type="entry name" value="UPF0114 PROTEIN YQHA"/>
    <property type="match status" value="1"/>
</dbReference>
<dbReference type="Pfam" id="PF03350">
    <property type="entry name" value="UPF0114"/>
    <property type="match status" value="1"/>
</dbReference>
<reference key="1">
    <citation type="journal article" date="2005" name="J. Bacteriol.">
        <title>Genomic sequence of an otitis media isolate of nontypeable Haemophilus influenzae: comparative study with H. influenzae serotype d, strain KW20.</title>
        <authorList>
            <person name="Harrison A."/>
            <person name="Dyer D.W."/>
            <person name="Gillaspy A."/>
            <person name="Ray W.C."/>
            <person name="Mungur R."/>
            <person name="Carson M.B."/>
            <person name="Zhong H."/>
            <person name="Gipson J."/>
            <person name="Gipson M."/>
            <person name="Johnson L.S."/>
            <person name="Lewis L."/>
            <person name="Bakaletz L.O."/>
            <person name="Munson R.S. Jr."/>
        </authorList>
    </citation>
    <scope>NUCLEOTIDE SEQUENCE [LARGE SCALE GENOMIC DNA]</scope>
    <source>
        <strain>86-028NP</strain>
    </source>
</reference>
<keyword id="KW-1003">Cell membrane</keyword>
<keyword id="KW-0472">Membrane</keyword>
<keyword id="KW-0812">Transmembrane</keyword>
<keyword id="KW-1133">Transmembrane helix</keyword>
<proteinExistence type="inferred from homology"/>
<protein>
    <recommendedName>
        <fullName evidence="1">UPF0114 protein NTHI0635</fullName>
    </recommendedName>
</protein>
<feature type="chain" id="PRO_1000009480" description="UPF0114 protein NTHI0635">
    <location>
        <begin position="1"/>
        <end position="183"/>
    </location>
</feature>
<feature type="transmembrane region" description="Helical" evidence="1">
    <location>
        <begin position="30"/>
        <end position="50"/>
    </location>
</feature>
<feature type="transmembrane region" description="Helical" evidence="1">
    <location>
        <begin position="68"/>
        <end position="88"/>
    </location>
</feature>
<feature type="transmembrane region" description="Helical" evidence="1">
    <location>
        <begin position="124"/>
        <end position="144"/>
    </location>
</feature>
<feature type="transmembrane region" description="Helical" evidence="1">
    <location>
        <begin position="150"/>
        <end position="170"/>
    </location>
</feature>
<comment type="subcellular location">
    <subcellularLocation>
        <location evidence="1">Cell membrane</location>
        <topology evidence="1">Multi-pass membrane protein</topology>
    </subcellularLocation>
</comment>
<comment type="similarity">
    <text evidence="1">Belongs to the UPF0114 family.</text>
</comment>